<keyword id="KW-0456">Lyase</keyword>
<keyword id="KW-0479">Metal-binding</keyword>
<keyword id="KW-1185">Reference proteome</keyword>
<protein>
    <recommendedName>
        <fullName>Putative 4-hydroxy-4-methyl-2-oxoglutarate aldolase</fullName>
        <shortName>HMG aldolase</shortName>
        <ecNumber>4.1.3.17</ecNumber>
    </recommendedName>
    <alternativeName>
        <fullName>Oxaloacetate decarboxylase</fullName>
        <shortName>OAA decarboxylase</shortName>
        <ecNumber>4.1.1.112</ecNumber>
    </alternativeName>
    <alternativeName>
        <fullName>Regulator of ribonuclease activity homolog</fullName>
    </alternativeName>
    <alternativeName>
        <fullName>RraA-like protein</fullName>
    </alternativeName>
</protein>
<feature type="chain" id="PRO_1000125594" description="Putative 4-hydroxy-4-methyl-2-oxoglutarate aldolase">
    <location>
        <begin position="1"/>
        <end position="164"/>
    </location>
</feature>
<feature type="binding site" evidence="1">
    <location>
        <begin position="80"/>
        <end position="83"/>
    </location>
    <ligand>
        <name>substrate</name>
    </ligand>
</feature>
<feature type="binding site" evidence="1">
    <location>
        <position position="102"/>
    </location>
    <ligand>
        <name>substrate</name>
    </ligand>
</feature>
<feature type="binding site" evidence="1">
    <location>
        <position position="103"/>
    </location>
    <ligand>
        <name>a divalent metal cation</name>
        <dbReference type="ChEBI" id="CHEBI:60240"/>
    </ligand>
</feature>
<gene>
    <name type="ordered locus">Bmul_1223</name>
    <name type="ordered locus">BMULJ_02024</name>
</gene>
<evidence type="ECO:0000250" key="1"/>
<evidence type="ECO:0000305" key="2"/>
<dbReference type="EC" id="4.1.3.17"/>
<dbReference type="EC" id="4.1.1.112"/>
<dbReference type="EMBL" id="CP000868">
    <property type="protein sequence ID" value="ABX14911.1"/>
    <property type="molecule type" value="Genomic_DNA"/>
</dbReference>
<dbReference type="EMBL" id="AP009385">
    <property type="protein sequence ID" value="BAG43941.1"/>
    <property type="molecule type" value="Genomic_DNA"/>
</dbReference>
<dbReference type="SMR" id="A9AHQ6"/>
<dbReference type="STRING" id="395019.BMULJ_02024"/>
<dbReference type="KEGG" id="bmj:BMULJ_02024"/>
<dbReference type="KEGG" id="bmu:Bmul_1223"/>
<dbReference type="eggNOG" id="COG0684">
    <property type="taxonomic scope" value="Bacteria"/>
</dbReference>
<dbReference type="HOGENOM" id="CLU_072626_4_0_4"/>
<dbReference type="Proteomes" id="UP000008815">
    <property type="component" value="Chromosome 1"/>
</dbReference>
<dbReference type="GO" id="GO:0047443">
    <property type="term" value="F:4-hydroxy-4-methyl-2-oxoglutarate aldolase activity"/>
    <property type="evidence" value="ECO:0007669"/>
    <property type="project" value="UniProtKB-EC"/>
</dbReference>
<dbReference type="GO" id="GO:0046872">
    <property type="term" value="F:metal ion binding"/>
    <property type="evidence" value="ECO:0007669"/>
    <property type="project" value="UniProtKB-KW"/>
</dbReference>
<dbReference type="GO" id="GO:0008948">
    <property type="term" value="F:oxaloacetate decarboxylase activity"/>
    <property type="evidence" value="ECO:0007669"/>
    <property type="project" value="UniProtKB-EC"/>
</dbReference>
<dbReference type="GO" id="GO:0008428">
    <property type="term" value="F:ribonuclease inhibitor activity"/>
    <property type="evidence" value="ECO:0007669"/>
    <property type="project" value="InterPro"/>
</dbReference>
<dbReference type="GO" id="GO:0051252">
    <property type="term" value="P:regulation of RNA metabolic process"/>
    <property type="evidence" value="ECO:0007669"/>
    <property type="project" value="InterPro"/>
</dbReference>
<dbReference type="CDD" id="cd16841">
    <property type="entry name" value="RraA_family"/>
    <property type="match status" value="1"/>
</dbReference>
<dbReference type="Gene3D" id="3.50.30.40">
    <property type="entry name" value="Ribonuclease E inhibitor RraA/RraA-like"/>
    <property type="match status" value="1"/>
</dbReference>
<dbReference type="InterPro" id="IPR010203">
    <property type="entry name" value="RraA"/>
</dbReference>
<dbReference type="InterPro" id="IPR005493">
    <property type="entry name" value="RraA/RraA-like"/>
</dbReference>
<dbReference type="InterPro" id="IPR036704">
    <property type="entry name" value="RraA/RraA-like_sf"/>
</dbReference>
<dbReference type="NCBIfam" id="TIGR01935">
    <property type="entry name" value="NOT-MenG"/>
    <property type="match status" value="1"/>
</dbReference>
<dbReference type="NCBIfam" id="NF006875">
    <property type="entry name" value="PRK09372.1"/>
    <property type="match status" value="1"/>
</dbReference>
<dbReference type="PANTHER" id="PTHR33254">
    <property type="entry name" value="4-HYDROXY-4-METHYL-2-OXOGLUTARATE ALDOLASE 3-RELATED"/>
    <property type="match status" value="1"/>
</dbReference>
<dbReference type="PANTHER" id="PTHR33254:SF4">
    <property type="entry name" value="4-HYDROXY-4-METHYL-2-OXOGLUTARATE ALDOLASE 3-RELATED"/>
    <property type="match status" value="1"/>
</dbReference>
<dbReference type="Pfam" id="PF03737">
    <property type="entry name" value="RraA-like"/>
    <property type="match status" value="1"/>
</dbReference>
<dbReference type="SUPFAM" id="SSF89562">
    <property type="entry name" value="RraA-like"/>
    <property type="match status" value="1"/>
</dbReference>
<reference key="1">
    <citation type="submission" date="2007-10" db="EMBL/GenBank/DDBJ databases">
        <title>Complete sequence of chromosome 1 of Burkholderia multivorans ATCC 17616.</title>
        <authorList>
            <person name="Copeland A."/>
            <person name="Lucas S."/>
            <person name="Lapidus A."/>
            <person name="Barry K."/>
            <person name="Glavina del Rio T."/>
            <person name="Dalin E."/>
            <person name="Tice H."/>
            <person name="Pitluck S."/>
            <person name="Chain P."/>
            <person name="Malfatti S."/>
            <person name="Shin M."/>
            <person name="Vergez L."/>
            <person name="Schmutz J."/>
            <person name="Larimer F."/>
            <person name="Land M."/>
            <person name="Hauser L."/>
            <person name="Kyrpides N."/>
            <person name="Kim E."/>
            <person name="Tiedje J."/>
            <person name="Richardson P."/>
        </authorList>
    </citation>
    <scope>NUCLEOTIDE SEQUENCE [LARGE SCALE GENOMIC DNA]</scope>
    <source>
        <strain>ATCC 17616 / 249</strain>
    </source>
</reference>
<reference key="2">
    <citation type="submission" date="2007-04" db="EMBL/GenBank/DDBJ databases">
        <title>Complete genome sequence of Burkholderia multivorans ATCC 17616.</title>
        <authorList>
            <person name="Ohtsubo Y."/>
            <person name="Yamashita A."/>
            <person name="Kurokawa K."/>
            <person name="Takami H."/>
            <person name="Yuhara S."/>
            <person name="Nishiyama E."/>
            <person name="Endo R."/>
            <person name="Miyazaki R."/>
            <person name="Ono A."/>
            <person name="Yano K."/>
            <person name="Ito M."/>
            <person name="Sota M."/>
            <person name="Yuji N."/>
            <person name="Hattori M."/>
            <person name="Tsuda M."/>
        </authorList>
    </citation>
    <scope>NUCLEOTIDE SEQUENCE [LARGE SCALE GENOMIC DNA]</scope>
    <source>
        <strain>ATCC 17616 / 249</strain>
    </source>
</reference>
<proteinExistence type="inferred from homology"/>
<sequence length="164" mass="16962">MTFATTDLCDAHEDKLAAGTLRVLQPALRPYGGAARFAGPAATLKVFEDNTLVRAALEQDGGGRVLVVDGGASLRCALVGGNLGALAEKNGWAGIVVHGCVRDAAELRECKVGVLALATHPRKSDKRGAGERDVPVTVLGTRIAPGEWIYADDDGVLVSATSLT</sequence>
<accession>A9AHQ6</accession>
<organism>
    <name type="scientific">Burkholderia multivorans (strain ATCC 17616 / 249)</name>
    <dbReference type="NCBI Taxonomy" id="395019"/>
    <lineage>
        <taxon>Bacteria</taxon>
        <taxon>Pseudomonadati</taxon>
        <taxon>Pseudomonadota</taxon>
        <taxon>Betaproteobacteria</taxon>
        <taxon>Burkholderiales</taxon>
        <taxon>Burkholderiaceae</taxon>
        <taxon>Burkholderia</taxon>
        <taxon>Burkholderia cepacia complex</taxon>
    </lineage>
</organism>
<comment type="function">
    <text evidence="1">Catalyzes the aldol cleavage of 4-hydroxy-4-methyl-2-oxoglutarate (HMG) into 2 molecules of pyruvate. Also contains a secondary oxaloacetate (OAA) decarboxylase activity due to the common pyruvate enolate transition state formed following C-C bond cleavage in the retro-aldol and decarboxylation reactions (By similarity).</text>
</comment>
<comment type="catalytic activity">
    <reaction>
        <text>4-hydroxy-4-methyl-2-oxoglutarate = 2 pyruvate</text>
        <dbReference type="Rhea" id="RHEA:22748"/>
        <dbReference type="ChEBI" id="CHEBI:15361"/>
        <dbReference type="ChEBI" id="CHEBI:58276"/>
        <dbReference type="EC" id="4.1.3.17"/>
    </reaction>
</comment>
<comment type="catalytic activity">
    <reaction>
        <text>oxaloacetate + H(+) = pyruvate + CO2</text>
        <dbReference type="Rhea" id="RHEA:15641"/>
        <dbReference type="ChEBI" id="CHEBI:15361"/>
        <dbReference type="ChEBI" id="CHEBI:15378"/>
        <dbReference type="ChEBI" id="CHEBI:16452"/>
        <dbReference type="ChEBI" id="CHEBI:16526"/>
        <dbReference type="EC" id="4.1.1.112"/>
    </reaction>
</comment>
<comment type="cofactor">
    <cofactor evidence="1">
        <name>a divalent metal cation</name>
        <dbReference type="ChEBI" id="CHEBI:60240"/>
    </cofactor>
    <text evidence="1">Divalent metal cation.</text>
</comment>
<comment type="subunit">
    <text evidence="1">Homotrimer.</text>
</comment>
<comment type="similarity">
    <text evidence="2">Belongs to the class II aldolase/RraA-like family.</text>
</comment>
<name>RRAAH_BURM1</name>